<sequence length="89" mass="10149">MSITAERRTALIGEYQTAATDTGSPEVQVALLSERITNLTEHLKTHAKDFHSRRGLLVMVGKRRGLLDYLKRKDQARYQTLIGRLGLRR</sequence>
<feature type="chain" id="PRO_1000086804" description="Small ribosomal subunit protein uS15">
    <location>
        <begin position="1"/>
        <end position="89"/>
    </location>
</feature>
<comment type="function">
    <text evidence="1">One of the primary rRNA binding proteins, it binds directly to 16S rRNA where it helps nucleate assembly of the platform of the 30S subunit by binding and bridging several RNA helices of the 16S rRNA.</text>
</comment>
<comment type="function">
    <text evidence="1">Forms an intersubunit bridge (bridge B4) with the 23S rRNA of the 50S subunit in the ribosome.</text>
</comment>
<comment type="subunit">
    <text evidence="1">Part of the 30S ribosomal subunit. Forms a bridge to the 50S subunit in the 70S ribosome, contacting the 23S rRNA.</text>
</comment>
<comment type="similarity">
    <text evidence="1">Belongs to the universal ribosomal protein uS15 family.</text>
</comment>
<keyword id="KW-1185">Reference proteome</keyword>
<keyword id="KW-0687">Ribonucleoprotein</keyword>
<keyword id="KW-0689">Ribosomal protein</keyword>
<keyword id="KW-0694">RNA-binding</keyword>
<keyword id="KW-0699">rRNA-binding</keyword>
<organism>
    <name type="scientific">Gluconacetobacter diazotrophicus (strain ATCC 49037 / DSM 5601 / CCUG 37298 / CIP 103539 / LMG 7603 / PAl5)</name>
    <dbReference type="NCBI Taxonomy" id="272568"/>
    <lineage>
        <taxon>Bacteria</taxon>
        <taxon>Pseudomonadati</taxon>
        <taxon>Pseudomonadota</taxon>
        <taxon>Alphaproteobacteria</taxon>
        <taxon>Acetobacterales</taxon>
        <taxon>Acetobacteraceae</taxon>
        <taxon>Gluconacetobacter</taxon>
    </lineage>
</organism>
<proteinExistence type="inferred from homology"/>
<name>RS15_GLUDA</name>
<reference key="1">
    <citation type="journal article" date="2009" name="BMC Genomics">
        <title>Complete genome sequence of the sugarcane nitrogen-fixing endophyte Gluconacetobacter diazotrophicus Pal5.</title>
        <authorList>
            <person name="Bertalan M."/>
            <person name="Albano R."/>
            <person name="de Padua V."/>
            <person name="Rouws L."/>
            <person name="Rojas C."/>
            <person name="Hemerly A."/>
            <person name="Teixeira K."/>
            <person name="Schwab S."/>
            <person name="Araujo J."/>
            <person name="Oliveira A."/>
            <person name="Franca L."/>
            <person name="Magalhaes V."/>
            <person name="Alqueres S."/>
            <person name="Cardoso A."/>
            <person name="Almeida W."/>
            <person name="Loureiro M.M."/>
            <person name="Nogueira E."/>
            <person name="Cidade D."/>
            <person name="Oliveira D."/>
            <person name="Simao T."/>
            <person name="Macedo J."/>
            <person name="Valadao A."/>
            <person name="Dreschsel M."/>
            <person name="Freitas F."/>
            <person name="Vidal M."/>
            <person name="Guedes H."/>
            <person name="Rodrigues E."/>
            <person name="Meneses C."/>
            <person name="Brioso P."/>
            <person name="Pozzer L."/>
            <person name="Figueiredo D."/>
            <person name="Montano H."/>
            <person name="Junior J."/>
            <person name="de Souza Filho G."/>
            <person name="Martin Quintana Flores V."/>
            <person name="Ferreira B."/>
            <person name="Branco A."/>
            <person name="Gonzalez P."/>
            <person name="Guillobel H."/>
            <person name="Lemos M."/>
            <person name="Seibel L."/>
            <person name="Macedo J."/>
            <person name="Alves-Ferreira M."/>
            <person name="Sachetto-Martins G."/>
            <person name="Coelho A."/>
            <person name="Santos E."/>
            <person name="Amaral G."/>
            <person name="Neves A."/>
            <person name="Pacheco A.B."/>
            <person name="Carvalho D."/>
            <person name="Lery L."/>
            <person name="Bisch P."/>
            <person name="Rossle S.C."/>
            <person name="Urmenyi T."/>
            <person name="Rael Pereira A."/>
            <person name="Silva R."/>
            <person name="Rondinelli E."/>
            <person name="von Kruger W."/>
            <person name="Martins O."/>
            <person name="Baldani J.I."/>
            <person name="Ferreira P.C."/>
        </authorList>
    </citation>
    <scope>NUCLEOTIDE SEQUENCE [LARGE SCALE GENOMIC DNA]</scope>
    <source>
        <strain>ATCC 49037 / DSM 5601 / CCUG 37298 / CIP 103539 / LMG 7603 / PAl5</strain>
    </source>
</reference>
<reference key="2">
    <citation type="journal article" date="2010" name="Stand. Genomic Sci.">
        <title>Two genome sequences of the same bacterial strain, Gluconacetobacter diazotrophicus PAl 5, suggest a new standard in genome sequence submission.</title>
        <authorList>
            <person name="Giongo A."/>
            <person name="Tyler H.L."/>
            <person name="Zipperer U.N."/>
            <person name="Triplett E.W."/>
        </authorList>
    </citation>
    <scope>NUCLEOTIDE SEQUENCE [LARGE SCALE GENOMIC DNA]</scope>
    <source>
        <strain>ATCC 49037 / DSM 5601 / CCUG 37298 / CIP 103539 / LMG 7603 / PAl5</strain>
    </source>
</reference>
<accession>A9HF29</accession>
<accession>B5ZDK4</accession>
<dbReference type="EMBL" id="AM889285">
    <property type="protein sequence ID" value="CAP55312.1"/>
    <property type="molecule type" value="Genomic_DNA"/>
</dbReference>
<dbReference type="EMBL" id="CP001189">
    <property type="protein sequence ID" value="ACI51834.1"/>
    <property type="molecule type" value="Genomic_DNA"/>
</dbReference>
<dbReference type="RefSeq" id="WP_012224615.1">
    <property type="nucleotide sequence ID" value="NC_010125.1"/>
</dbReference>
<dbReference type="SMR" id="A9HF29"/>
<dbReference type="STRING" id="272568.GDI1369"/>
<dbReference type="KEGG" id="gdi:GDI1369"/>
<dbReference type="KEGG" id="gdj:Gdia_2074"/>
<dbReference type="eggNOG" id="COG0184">
    <property type="taxonomic scope" value="Bacteria"/>
</dbReference>
<dbReference type="HOGENOM" id="CLU_148518_0_0_5"/>
<dbReference type="OrthoDB" id="9799262at2"/>
<dbReference type="Proteomes" id="UP000001176">
    <property type="component" value="Chromosome"/>
</dbReference>
<dbReference type="GO" id="GO:0022627">
    <property type="term" value="C:cytosolic small ribosomal subunit"/>
    <property type="evidence" value="ECO:0007669"/>
    <property type="project" value="TreeGrafter"/>
</dbReference>
<dbReference type="GO" id="GO:0019843">
    <property type="term" value="F:rRNA binding"/>
    <property type="evidence" value="ECO:0007669"/>
    <property type="project" value="UniProtKB-UniRule"/>
</dbReference>
<dbReference type="GO" id="GO:0003735">
    <property type="term" value="F:structural constituent of ribosome"/>
    <property type="evidence" value="ECO:0007669"/>
    <property type="project" value="InterPro"/>
</dbReference>
<dbReference type="GO" id="GO:0006412">
    <property type="term" value="P:translation"/>
    <property type="evidence" value="ECO:0007669"/>
    <property type="project" value="UniProtKB-UniRule"/>
</dbReference>
<dbReference type="CDD" id="cd00353">
    <property type="entry name" value="Ribosomal_S15p_S13e"/>
    <property type="match status" value="1"/>
</dbReference>
<dbReference type="FunFam" id="1.10.287.10:FF:000002">
    <property type="entry name" value="30S ribosomal protein S15"/>
    <property type="match status" value="1"/>
</dbReference>
<dbReference type="Gene3D" id="6.10.250.3130">
    <property type="match status" value="1"/>
</dbReference>
<dbReference type="Gene3D" id="1.10.287.10">
    <property type="entry name" value="S15/NS1, RNA-binding"/>
    <property type="match status" value="1"/>
</dbReference>
<dbReference type="HAMAP" id="MF_01343_B">
    <property type="entry name" value="Ribosomal_uS15_B"/>
    <property type="match status" value="1"/>
</dbReference>
<dbReference type="InterPro" id="IPR000589">
    <property type="entry name" value="Ribosomal_uS15"/>
</dbReference>
<dbReference type="InterPro" id="IPR005290">
    <property type="entry name" value="Ribosomal_uS15_bac-type"/>
</dbReference>
<dbReference type="InterPro" id="IPR009068">
    <property type="entry name" value="uS15_NS1_RNA-bd_sf"/>
</dbReference>
<dbReference type="NCBIfam" id="TIGR00952">
    <property type="entry name" value="S15_bact"/>
    <property type="match status" value="1"/>
</dbReference>
<dbReference type="PANTHER" id="PTHR23321">
    <property type="entry name" value="RIBOSOMAL PROTEIN S15, BACTERIAL AND ORGANELLAR"/>
    <property type="match status" value="1"/>
</dbReference>
<dbReference type="PANTHER" id="PTHR23321:SF26">
    <property type="entry name" value="SMALL RIBOSOMAL SUBUNIT PROTEIN US15M"/>
    <property type="match status" value="1"/>
</dbReference>
<dbReference type="Pfam" id="PF00312">
    <property type="entry name" value="Ribosomal_S15"/>
    <property type="match status" value="1"/>
</dbReference>
<dbReference type="SMART" id="SM01387">
    <property type="entry name" value="Ribosomal_S15"/>
    <property type="match status" value="1"/>
</dbReference>
<dbReference type="SUPFAM" id="SSF47060">
    <property type="entry name" value="S15/NS1 RNA-binding domain"/>
    <property type="match status" value="1"/>
</dbReference>
<dbReference type="PROSITE" id="PS00362">
    <property type="entry name" value="RIBOSOMAL_S15"/>
    <property type="match status" value="1"/>
</dbReference>
<gene>
    <name evidence="1" type="primary">rpsO</name>
    <name type="ordered locus">GDI1369</name>
    <name type="ordered locus">Gdia_2074</name>
</gene>
<protein>
    <recommendedName>
        <fullName evidence="1">Small ribosomal subunit protein uS15</fullName>
    </recommendedName>
    <alternativeName>
        <fullName evidence="2">30S ribosomal protein S15</fullName>
    </alternativeName>
</protein>
<evidence type="ECO:0000255" key="1">
    <source>
        <dbReference type="HAMAP-Rule" id="MF_01343"/>
    </source>
</evidence>
<evidence type="ECO:0000305" key="2"/>